<organism>
    <name type="scientific">Xanthomonas oryzae pv. oryzae (strain KACC10331 / KXO85)</name>
    <dbReference type="NCBI Taxonomy" id="291331"/>
    <lineage>
        <taxon>Bacteria</taxon>
        <taxon>Pseudomonadati</taxon>
        <taxon>Pseudomonadota</taxon>
        <taxon>Gammaproteobacteria</taxon>
        <taxon>Lysobacterales</taxon>
        <taxon>Lysobacteraceae</taxon>
        <taxon>Xanthomonas</taxon>
    </lineage>
</organism>
<reference key="1">
    <citation type="journal article" date="2005" name="Nucleic Acids Res.">
        <title>The genome sequence of Xanthomonas oryzae pathovar oryzae KACC10331, the bacterial blight pathogen of rice.</title>
        <authorList>
            <person name="Lee B.-M."/>
            <person name="Park Y.-J."/>
            <person name="Park D.-S."/>
            <person name="Kang H.-W."/>
            <person name="Kim J.-G."/>
            <person name="Song E.-S."/>
            <person name="Park I.-C."/>
            <person name="Yoon U.-H."/>
            <person name="Hahn J.-H."/>
            <person name="Koo B.-S."/>
            <person name="Lee G.-B."/>
            <person name="Kim H."/>
            <person name="Park H.-S."/>
            <person name="Yoon K.-O."/>
            <person name="Kim J.-H."/>
            <person name="Jung C.-H."/>
            <person name="Koh N.-H."/>
            <person name="Seo J.-S."/>
            <person name="Go S.-J."/>
        </authorList>
    </citation>
    <scope>NUCLEOTIDE SEQUENCE [LARGE SCALE GENOMIC DNA]</scope>
    <source>
        <strain>KACC10331 / KXO85</strain>
    </source>
</reference>
<name>LEU1_XANOR</name>
<feature type="chain" id="PRO_1000149336" description="2-isopropylmalate synthase">
    <location>
        <begin position="1"/>
        <end position="520"/>
    </location>
</feature>
<feature type="domain" description="Pyruvate carboxyltransferase" evidence="1">
    <location>
        <begin position="12"/>
        <end position="274"/>
    </location>
</feature>
<feature type="region of interest" description="Regulatory domain" evidence="1">
    <location>
        <begin position="396"/>
        <end position="520"/>
    </location>
</feature>
<feature type="binding site" evidence="1">
    <location>
        <position position="21"/>
    </location>
    <ligand>
        <name>Mn(2+)</name>
        <dbReference type="ChEBI" id="CHEBI:29035"/>
    </ligand>
</feature>
<feature type="binding site" evidence="1">
    <location>
        <position position="209"/>
    </location>
    <ligand>
        <name>Mn(2+)</name>
        <dbReference type="ChEBI" id="CHEBI:29035"/>
    </ligand>
</feature>
<feature type="binding site" evidence="1">
    <location>
        <position position="211"/>
    </location>
    <ligand>
        <name>Mn(2+)</name>
        <dbReference type="ChEBI" id="CHEBI:29035"/>
    </ligand>
</feature>
<feature type="binding site" evidence="1">
    <location>
        <position position="245"/>
    </location>
    <ligand>
        <name>Mn(2+)</name>
        <dbReference type="ChEBI" id="CHEBI:29035"/>
    </ligand>
</feature>
<sequence length="520" mass="56370">MNTTISNQTPHIRIFDTTLRDGEQSPGCSMTPQQKLVMARALDALGVDIIETGFPASSHSDREAVAMMGRELRRPTLAVLSRCLQADIETSARALETVANPRLHVFLSTSPLHREHKLRMSREQVLESVHRHVTLARGYIDDVEFSAEDATRTEEDFLAEVTRVAVAAGATTINLPDTVGFTTPEEIRGMFSRLIASVEGADKVIFSAHCHNDLGLAVANSLAAIEGGARQVECTINGIGERAGNCALEEITMALKVRGAFYNIDSAINTPRIVSTSQLLQRLVGMPVQRNKAVVGGNAFAHESGIHQHGMLRHRGTYEIMRPEDVGWESSQMVLGRHSGRAAVERRLRALGYLLEEEEVKLMFEQFKALCEKQRLVTDADLQALMQDATVQEGYRLASMTISDVGSRANALVELSDPEGNRVAETAQGNGPVDALFGALASATGVKLELDSYQVHSVGIGADARGEASLSVRHDGVEYEGTGTSKDIIEASALAWLDVANRLLRQRERGVIAGKTAAVA</sequence>
<protein>
    <recommendedName>
        <fullName evidence="1">2-isopropylmalate synthase</fullName>
        <ecNumber evidence="1">2.3.3.13</ecNumber>
    </recommendedName>
    <alternativeName>
        <fullName evidence="1">Alpha-IPM synthase</fullName>
    </alternativeName>
    <alternativeName>
        <fullName evidence="1">Alpha-isopropylmalate synthase</fullName>
    </alternativeName>
</protein>
<evidence type="ECO:0000255" key="1">
    <source>
        <dbReference type="HAMAP-Rule" id="MF_01025"/>
    </source>
</evidence>
<proteinExistence type="inferred from homology"/>
<accession>Q5H4C6</accession>
<dbReference type="EC" id="2.3.3.13" evidence="1"/>
<dbReference type="EMBL" id="AE013598">
    <property type="protein sequence ID" value="AAW74195.1"/>
    <property type="molecule type" value="Genomic_DNA"/>
</dbReference>
<dbReference type="SMR" id="Q5H4C6"/>
<dbReference type="STRING" id="291331.XOO0941"/>
<dbReference type="KEGG" id="xoo:XOO0941"/>
<dbReference type="PATRIC" id="fig|291331.8.peg.1048"/>
<dbReference type="HOGENOM" id="CLU_022158_0_1_6"/>
<dbReference type="UniPathway" id="UPA00048">
    <property type="reaction ID" value="UER00070"/>
</dbReference>
<dbReference type="Proteomes" id="UP000006735">
    <property type="component" value="Chromosome"/>
</dbReference>
<dbReference type="GO" id="GO:0005829">
    <property type="term" value="C:cytosol"/>
    <property type="evidence" value="ECO:0007669"/>
    <property type="project" value="TreeGrafter"/>
</dbReference>
<dbReference type="GO" id="GO:0003852">
    <property type="term" value="F:2-isopropylmalate synthase activity"/>
    <property type="evidence" value="ECO:0007669"/>
    <property type="project" value="UniProtKB-UniRule"/>
</dbReference>
<dbReference type="GO" id="GO:0003985">
    <property type="term" value="F:acetyl-CoA C-acetyltransferase activity"/>
    <property type="evidence" value="ECO:0007669"/>
    <property type="project" value="UniProtKB-UniRule"/>
</dbReference>
<dbReference type="GO" id="GO:0030145">
    <property type="term" value="F:manganese ion binding"/>
    <property type="evidence" value="ECO:0007669"/>
    <property type="project" value="UniProtKB-UniRule"/>
</dbReference>
<dbReference type="GO" id="GO:0009098">
    <property type="term" value="P:L-leucine biosynthetic process"/>
    <property type="evidence" value="ECO:0007669"/>
    <property type="project" value="UniProtKB-UniRule"/>
</dbReference>
<dbReference type="CDD" id="cd07940">
    <property type="entry name" value="DRE_TIM_IPMS"/>
    <property type="match status" value="1"/>
</dbReference>
<dbReference type="FunFam" id="1.10.238.260:FF:000001">
    <property type="entry name" value="2-isopropylmalate synthase"/>
    <property type="match status" value="1"/>
</dbReference>
<dbReference type="FunFam" id="3.20.20.70:FF:000010">
    <property type="entry name" value="2-isopropylmalate synthase"/>
    <property type="match status" value="1"/>
</dbReference>
<dbReference type="FunFam" id="3.30.160.270:FF:000003">
    <property type="entry name" value="2-isopropylmalate synthase"/>
    <property type="match status" value="1"/>
</dbReference>
<dbReference type="Gene3D" id="1.10.238.260">
    <property type="match status" value="1"/>
</dbReference>
<dbReference type="Gene3D" id="3.30.160.270">
    <property type="match status" value="1"/>
</dbReference>
<dbReference type="Gene3D" id="3.20.20.70">
    <property type="entry name" value="Aldolase class I"/>
    <property type="match status" value="1"/>
</dbReference>
<dbReference type="HAMAP" id="MF_01025">
    <property type="entry name" value="LeuA_type1"/>
    <property type="match status" value="1"/>
</dbReference>
<dbReference type="InterPro" id="IPR050073">
    <property type="entry name" value="2-IPM_HCS-like"/>
</dbReference>
<dbReference type="InterPro" id="IPR013709">
    <property type="entry name" value="2-isopropylmalate_synth_dimer"/>
</dbReference>
<dbReference type="InterPro" id="IPR002034">
    <property type="entry name" value="AIPM/Hcit_synth_CS"/>
</dbReference>
<dbReference type="InterPro" id="IPR013785">
    <property type="entry name" value="Aldolase_TIM"/>
</dbReference>
<dbReference type="InterPro" id="IPR054691">
    <property type="entry name" value="LeuA/HCS_post-cat"/>
</dbReference>
<dbReference type="InterPro" id="IPR036230">
    <property type="entry name" value="LeuA_allosteric_dom_sf"/>
</dbReference>
<dbReference type="InterPro" id="IPR005671">
    <property type="entry name" value="LeuA_bact_synth"/>
</dbReference>
<dbReference type="InterPro" id="IPR000891">
    <property type="entry name" value="PYR_CT"/>
</dbReference>
<dbReference type="NCBIfam" id="TIGR00973">
    <property type="entry name" value="leuA_bact"/>
    <property type="match status" value="1"/>
</dbReference>
<dbReference type="NCBIfam" id="NF002086">
    <property type="entry name" value="PRK00915.1-3"/>
    <property type="match status" value="1"/>
</dbReference>
<dbReference type="PANTHER" id="PTHR10277:SF9">
    <property type="entry name" value="2-ISOPROPYLMALATE SYNTHASE 1, CHLOROPLASTIC-RELATED"/>
    <property type="match status" value="1"/>
</dbReference>
<dbReference type="PANTHER" id="PTHR10277">
    <property type="entry name" value="HOMOCITRATE SYNTHASE-RELATED"/>
    <property type="match status" value="1"/>
</dbReference>
<dbReference type="Pfam" id="PF22617">
    <property type="entry name" value="HCS_D2"/>
    <property type="match status" value="1"/>
</dbReference>
<dbReference type="Pfam" id="PF00682">
    <property type="entry name" value="HMGL-like"/>
    <property type="match status" value="1"/>
</dbReference>
<dbReference type="Pfam" id="PF08502">
    <property type="entry name" value="LeuA_dimer"/>
    <property type="match status" value="1"/>
</dbReference>
<dbReference type="SMART" id="SM00917">
    <property type="entry name" value="LeuA_dimer"/>
    <property type="match status" value="1"/>
</dbReference>
<dbReference type="SUPFAM" id="SSF110921">
    <property type="entry name" value="2-isopropylmalate synthase LeuA, allosteric (dimerisation) domain"/>
    <property type="match status" value="1"/>
</dbReference>
<dbReference type="SUPFAM" id="SSF51569">
    <property type="entry name" value="Aldolase"/>
    <property type="match status" value="1"/>
</dbReference>
<dbReference type="PROSITE" id="PS00815">
    <property type="entry name" value="AIPM_HOMOCIT_SYNTH_1"/>
    <property type="match status" value="1"/>
</dbReference>
<dbReference type="PROSITE" id="PS00816">
    <property type="entry name" value="AIPM_HOMOCIT_SYNTH_2"/>
    <property type="match status" value="1"/>
</dbReference>
<dbReference type="PROSITE" id="PS50991">
    <property type="entry name" value="PYR_CT"/>
    <property type="match status" value="1"/>
</dbReference>
<keyword id="KW-0028">Amino-acid biosynthesis</keyword>
<keyword id="KW-0100">Branched-chain amino acid biosynthesis</keyword>
<keyword id="KW-0963">Cytoplasm</keyword>
<keyword id="KW-0432">Leucine biosynthesis</keyword>
<keyword id="KW-0464">Manganese</keyword>
<keyword id="KW-0479">Metal-binding</keyword>
<keyword id="KW-1185">Reference proteome</keyword>
<keyword id="KW-0808">Transferase</keyword>
<comment type="function">
    <text evidence="1">Catalyzes the condensation of the acetyl group of acetyl-CoA with 3-methyl-2-oxobutanoate (2-ketoisovalerate) to form 3-carboxy-3-hydroxy-4-methylpentanoate (2-isopropylmalate).</text>
</comment>
<comment type="catalytic activity">
    <reaction evidence="1">
        <text>3-methyl-2-oxobutanoate + acetyl-CoA + H2O = (2S)-2-isopropylmalate + CoA + H(+)</text>
        <dbReference type="Rhea" id="RHEA:21524"/>
        <dbReference type="ChEBI" id="CHEBI:1178"/>
        <dbReference type="ChEBI" id="CHEBI:11851"/>
        <dbReference type="ChEBI" id="CHEBI:15377"/>
        <dbReference type="ChEBI" id="CHEBI:15378"/>
        <dbReference type="ChEBI" id="CHEBI:57287"/>
        <dbReference type="ChEBI" id="CHEBI:57288"/>
        <dbReference type="EC" id="2.3.3.13"/>
    </reaction>
</comment>
<comment type="cofactor">
    <cofactor evidence="1">
        <name>Mn(2+)</name>
        <dbReference type="ChEBI" id="CHEBI:29035"/>
    </cofactor>
</comment>
<comment type="pathway">
    <text evidence="1">Amino-acid biosynthesis; L-leucine biosynthesis; L-leucine from 3-methyl-2-oxobutanoate: step 1/4.</text>
</comment>
<comment type="subunit">
    <text evidence="1">Homodimer.</text>
</comment>
<comment type="subcellular location">
    <subcellularLocation>
        <location evidence="1">Cytoplasm</location>
    </subcellularLocation>
</comment>
<comment type="similarity">
    <text evidence="1">Belongs to the alpha-IPM synthase/homocitrate synthase family. LeuA type 1 subfamily.</text>
</comment>
<gene>
    <name evidence="1" type="primary">leuA</name>
    <name type="ordered locus">XOO0941</name>
</gene>